<gene>
    <name evidence="1" type="primary">fis</name>
    <name type="ordered locus">SF3299</name>
    <name type="ordered locus">S3516</name>
</gene>
<keyword id="KW-0010">Activator</keyword>
<keyword id="KW-0238">DNA-binding</keyword>
<keyword id="KW-1185">Reference proteome</keyword>
<keyword id="KW-0804">Transcription</keyword>
<keyword id="KW-0805">Transcription regulation</keyword>
<proteinExistence type="inferred from homology"/>
<evidence type="ECO:0000255" key="1">
    <source>
        <dbReference type="HAMAP-Rule" id="MF_00166"/>
    </source>
</evidence>
<name>FIS_SHIFL</name>
<accession>P0A6R8</accession>
<accession>P11028</accession>
<accession>P37404</accession>
<sequence>MFEQRVNSDVLTVSTVNSQDQVTQKPLRDSVKQALKNYFAQLNGQDVNDLYELVLAEVEQPLLDMVMQYTRGNQTRAALMMGINRGTLRKKLKKYGMN</sequence>
<dbReference type="EMBL" id="AE005674">
    <property type="protein sequence ID" value="AAN44763.1"/>
    <property type="molecule type" value="Genomic_DNA"/>
</dbReference>
<dbReference type="EMBL" id="AE014073">
    <property type="protein sequence ID" value="AAP18574.1"/>
    <property type="molecule type" value="Genomic_DNA"/>
</dbReference>
<dbReference type="RefSeq" id="NP_709056.1">
    <property type="nucleotide sequence ID" value="NC_004337.2"/>
</dbReference>
<dbReference type="RefSeq" id="WP_000462905.1">
    <property type="nucleotide sequence ID" value="NZ_WPGW01000026.1"/>
</dbReference>
<dbReference type="SMR" id="P0A6R8"/>
<dbReference type="STRING" id="198214.SF3299"/>
<dbReference type="PaxDb" id="198214-SF3299"/>
<dbReference type="GeneID" id="1027065"/>
<dbReference type="GeneID" id="98390389"/>
<dbReference type="KEGG" id="sfl:SF3299"/>
<dbReference type="KEGG" id="sfx:S3516"/>
<dbReference type="PATRIC" id="fig|198214.7.peg.3907"/>
<dbReference type="HOGENOM" id="CLU_158040_3_0_6"/>
<dbReference type="Proteomes" id="UP000001006">
    <property type="component" value="Chromosome"/>
</dbReference>
<dbReference type="Proteomes" id="UP000002673">
    <property type="component" value="Chromosome"/>
</dbReference>
<dbReference type="GO" id="GO:0003700">
    <property type="term" value="F:DNA-binding transcription factor activity"/>
    <property type="evidence" value="ECO:0007669"/>
    <property type="project" value="UniProtKB-UniRule"/>
</dbReference>
<dbReference type="GO" id="GO:0043565">
    <property type="term" value="F:sequence-specific DNA binding"/>
    <property type="evidence" value="ECO:0007669"/>
    <property type="project" value="InterPro"/>
</dbReference>
<dbReference type="FunFam" id="1.10.10.60:FF:000006">
    <property type="entry name" value="DNA-binding protein Fis"/>
    <property type="match status" value="1"/>
</dbReference>
<dbReference type="Gene3D" id="1.10.10.60">
    <property type="entry name" value="Homeodomain-like"/>
    <property type="match status" value="1"/>
</dbReference>
<dbReference type="HAMAP" id="MF_00166">
    <property type="entry name" value="DNA_binding_Fis"/>
    <property type="match status" value="1"/>
</dbReference>
<dbReference type="InterPro" id="IPR005412">
    <property type="entry name" value="Fis_DNA-bd"/>
</dbReference>
<dbReference type="InterPro" id="IPR009057">
    <property type="entry name" value="Homeodomain-like_sf"/>
</dbReference>
<dbReference type="InterPro" id="IPR002197">
    <property type="entry name" value="HTH_Fis"/>
</dbReference>
<dbReference type="InterPro" id="IPR050207">
    <property type="entry name" value="Trans_regulatory_Fis"/>
</dbReference>
<dbReference type="NCBIfam" id="NF001659">
    <property type="entry name" value="PRK00430.1"/>
    <property type="match status" value="1"/>
</dbReference>
<dbReference type="PANTHER" id="PTHR47918">
    <property type="entry name" value="DNA-BINDING PROTEIN FIS"/>
    <property type="match status" value="1"/>
</dbReference>
<dbReference type="PANTHER" id="PTHR47918:SF1">
    <property type="entry name" value="DNA-BINDING PROTEIN FIS"/>
    <property type="match status" value="1"/>
</dbReference>
<dbReference type="Pfam" id="PF02954">
    <property type="entry name" value="HTH_8"/>
    <property type="match status" value="1"/>
</dbReference>
<dbReference type="PIRSF" id="PIRSF002097">
    <property type="entry name" value="DNA-binding_Fis"/>
    <property type="match status" value="1"/>
</dbReference>
<dbReference type="PRINTS" id="PR01591">
    <property type="entry name" value="DNABINDNGFIS"/>
</dbReference>
<dbReference type="PRINTS" id="PR01590">
    <property type="entry name" value="HTHFIS"/>
</dbReference>
<dbReference type="SUPFAM" id="SSF46689">
    <property type="entry name" value="Homeodomain-like"/>
    <property type="match status" value="1"/>
</dbReference>
<reference key="1">
    <citation type="journal article" date="2002" name="Nucleic Acids Res.">
        <title>Genome sequence of Shigella flexneri 2a: insights into pathogenicity through comparison with genomes of Escherichia coli K12 and O157.</title>
        <authorList>
            <person name="Jin Q."/>
            <person name="Yuan Z."/>
            <person name="Xu J."/>
            <person name="Wang Y."/>
            <person name="Shen Y."/>
            <person name="Lu W."/>
            <person name="Wang J."/>
            <person name="Liu H."/>
            <person name="Yang J."/>
            <person name="Yang F."/>
            <person name="Zhang X."/>
            <person name="Zhang J."/>
            <person name="Yang G."/>
            <person name="Wu H."/>
            <person name="Qu D."/>
            <person name="Dong J."/>
            <person name="Sun L."/>
            <person name="Xue Y."/>
            <person name="Zhao A."/>
            <person name="Gao Y."/>
            <person name="Zhu J."/>
            <person name="Kan B."/>
            <person name="Ding K."/>
            <person name="Chen S."/>
            <person name="Cheng H."/>
            <person name="Yao Z."/>
            <person name="He B."/>
            <person name="Chen R."/>
            <person name="Ma D."/>
            <person name="Qiang B."/>
            <person name="Wen Y."/>
            <person name="Hou Y."/>
            <person name="Yu J."/>
        </authorList>
    </citation>
    <scope>NUCLEOTIDE SEQUENCE [LARGE SCALE GENOMIC DNA]</scope>
    <source>
        <strain>301 / Serotype 2a</strain>
    </source>
</reference>
<reference key="2">
    <citation type="journal article" date="2003" name="Infect. Immun.">
        <title>Complete genome sequence and comparative genomics of Shigella flexneri serotype 2a strain 2457T.</title>
        <authorList>
            <person name="Wei J."/>
            <person name="Goldberg M.B."/>
            <person name="Burland V."/>
            <person name="Venkatesan M.M."/>
            <person name="Deng W."/>
            <person name="Fournier G."/>
            <person name="Mayhew G.F."/>
            <person name="Plunkett G. III"/>
            <person name="Rose D.J."/>
            <person name="Darling A."/>
            <person name="Mau B."/>
            <person name="Perna N.T."/>
            <person name="Payne S.M."/>
            <person name="Runyen-Janecky L.J."/>
            <person name="Zhou S."/>
            <person name="Schwartz D.C."/>
            <person name="Blattner F.R."/>
        </authorList>
    </citation>
    <scope>NUCLEOTIDE SEQUENCE [LARGE SCALE GENOMIC DNA]</scope>
    <source>
        <strain>ATCC 700930 / 2457T / Serotype 2a</strain>
    </source>
</reference>
<comment type="function">
    <text evidence="1">Activates ribosomal RNA transcription. Plays a direct role in upstream activation of rRNA promoters.</text>
</comment>
<comment type="subunit">
    <text evidence="1">Homodimer.</text>
</comment>
<comment type="similarity">
    <text evidence="1">Belongs to the transcriptional regulatory Fis family.</text>
</comment>
<protein>
    <recommendedName>
        <fullName evidence="1">DNA-binding protein Fis</fullName>
    </recommendedName>
</protein>
<organism>
    <name type="scientific">Shigella flexneri</name>
    <dbReference type="NCBI Taxonomy" id="623"/>
    <lineage>
        <taxon>Bacteria</taxon>
        <taxon>Pseudomonadati</taxon>
        <taxon>Pseudomonadota</taxon>
        <taxon>Gammaproteobacteria</taxon>
        <taxon>Enterobacterales</taxon>
        <taxon>Enterobacteriaceae</taxon>
        <taxon>Shigella</taxon>
    </lineage>
</organism>
<feature type="chain" id="PRO_0000203897" description="DNA-binding protein Fis">
    <location>
        <begin position="1"/>
        <end position="98"/>
    </location>
</feature>
<feature type="DNA-binding region" description="H-T-H motif" evidence="1">
    <location>
        <begin position="74"/>
        <end position="93"/>
    </location>
</feature>